<proteinExistence type="evidence at protein level"/>
<organism>
    <name type="scientific">Acaryochloris marina (strain MBIC 11017)</name>
    <dbReference type="NCBI Taxonomy" id="329726"/>
    <lineage>
        <taxon>Bacteria</taxon>
        <taxon>Bacillati</taxon>
        <taxon>Cyanobacteriota</taxon>
        <taxon>Cyanophyceae</taxon>
        <taxon>Acaryochloridales</taxon>
        <taxon>Acaryochloridaceae</taxon>
        <taxon>Acaryochloris</taxon>
    </lineage>
</organism>
<comment type="function">
    <text evidence="1">May help in the organization of the PsaE and PsaF subunits.</text>
</comment>
<comment type="subcellular location">
    <subcellularLocation>
        <location evidence="1">Cellular thylakoid membrane</location>
        <topology evidence="1">Single-pass membrane protein</topology>
    </subcellularLocation>
</comment>
<comment type="similarity">
    <text evidence="1">Belongs to the PsaJ family.</text>
</comment>
<evidence type="ECO:0000255" key="1">
    <source>
        <dbReference type="HAMAP-Rule" id="MF_00522"/>
    </source>
</evidence>
<evidence type="ECO:0007829" key="2">
    <source>
        <dbReference type="PDB" id="7DWQ"/>
    </source>
</evidence>
<name>PSAJ_ACAM1</name>
<keyword id="KW-0002">3D-structure</keyword>
<keyword id="KW-0472">Membrane</keyword>
<keyword id="KW-0602">Photosynthesis</keyword>
<keyword id="KW-0603">Photosystem I</keyword>
<keyword id="KW-1185">Reference proteome</keyword>
<keyword id="KW-0793">Thylakoid</keyword>
<keyword id="KW-0812">Transmembrane</keyword>
<keyword id="KW-1133">Transmembrane helix</keyword>
<feature type="chain" id="PRO_0000354113" description="Photosystem I reaction center subunit IX">
    <location>
        <begin position="1"/>
        <end position="51"/>
    </location>
</feature>
<feature type="transmembrane region" description="Helical" evidence="1">
    <location>
        <begin position="17"/>
        <end position="37"/>
    </location>
</feature>
<feature type="helix" evidence="2">
    <location>
        <begin position="22"/>
        <end position="40"/>
    </location>
</feature>
<accession>B0C7S6</accession>
<reference key="1">
    <citation type="journal article" date="2008" name="Proc. Natl. Acad. Sci. U.S.A.">
        <title>Niche adaptation and genome expansion in the chlorophyll d-producing cyanobacterium Acaryochloris marina.</title>
        <authorList>
            <person name="Swingley W.D."/>
            <person name="Chen M."/>
            <person name="Cheung P.C."/>
            <person name="Conrad A.L."/>
            <person name="Dejesa L.C."/>
            <person name="Hao J."/>
            <person name="Honchak B.M."/>
            <person name="Karbach L.E."/>
            <person name="Kurdoglu A."/>
            <person name="Lahiri S."/>
            <person name="Mastrian S.D."/>
            <person name="Miyashita H."/>
            <person name="Page L."/>
            <person name="Ramakrishna P."/>
            <person name="Satoh S."/>
            <person name="Sattley W.M."/>
            <person name="Shimada Y."/>
            <person name="Taylor H.L."/>
            <person name="Tomo T."/>
            <person name="Tsuchiya T."/>
            <person name="Wang Z.T."/>
            <person name="Raymond J."/>
            <person name="Mimuro M."/>
            <person name="Blankenship R.E."/>
            <person name="Touchman J.W."/>
        </authorList>
    </citation>
    <scope>NUCLEOTIDE SEQUENCE [LARGE SCALE GENOMIC DNA]</scope>
    <source>
        <strain>MBIC 11017</strain>
    </source>
</reference>
<protein>
    <recommendedName>
        <fullName evidence="1">Photosystem I reaction center subunit IX</fullName>
    </recommendedName>
</protein>
<dbReference type="EMBL" id="CP000828">
    <property type="protein sequence ID" value="ABW26467.1"/>
    <property type="molecule type" value="Genomic_DNA"/>
</dbReference>
<dbReference type="RefSeq" id="WP_012161998.1">
    <property type="nucleotide sequence ID" value="NC_009925.1"/>
</dbReference>
<dbReference type="PDB" id="7COY">
    <property type="method" value="EM"/>
    <property type="resolution" value="2.50 A"/>
    <property type="chains" value="aJ/bJ/cJ=1-51"/>
</dbReference>
<dbReference type="PDB" id="7DWQ">
    <property type="method" value="EM"/>
    <property type="resolution" value="3.30 A"/>
    <property type="chains" value="J=1-51"/>
</dbReference>
<dbReference type="PDBsum" id="7COY"/>
<dbReference type="PDBsum" id="7DWQ"/>
<dbReference type="EMDB" id="EMD-30420"/>
<dbReference type="EMDB" id="EMD-30882"/>
<dbReference type="SMR" id="B0C7S6"/>
<dbReference type="STRING" id="329726.AM1_1439"/>
<dbReference type="TCDB" id="5.B.4.1.2">
    <property type="family name" value="the plant photosystem i supercomplex (psi) family"/>
</dbReference>
<dbReference type="KEGG" id="amr:AM1_1439"/>
<dbReference type="HOGENOM" id="CLU_212133_1_0_3"/>
<dbReference type="OrthoDB" id="532702at2"/>
<dbReference type="Proteomes" id="UP000000268">
    <property type="component" value="Chromosome"/>
</dbReference>
<dbReference type="GO" id="GO:0009522">
    <property type="term" value="C:photosystem I"/>
    <property type="evidence" value="ECO:0007669"/>
    <property type="project" value="UniProtKB-KW"/>
</dbReference>
<dbReference type="GO" id="GO:0031676">
    <property type="term" value="C:plasma membrane-derived thylakoid membrane"/>
    <property type="evidence" value="ECO:0007669"/>
    <property type="project" value="UniProtKB-SubCell"/>
</dbReference>
<dbReference type="GO" id="GO:0015979">
    <property type="term" value="P:photosynthesis"/>
    <property type="evidence" value="ECO:0007669"/>
    <property type="project" value="UniProtKB-UniRule"/>
</dbReference>
<dbReference type="Gene3D" id="1.20.5.510">
    <property type="entry name" value="Single helix bin"/>
    <property type="match status" value="1"/>
</dbReference>
<dbReference type="HAMAP" id="MF_00522">
    <property type="entry name" value="PSI_PsaJ"/>
    <property type="match status" value="1"/>
</dbReference>
<dbReference type="InterPro" id="IPR002615">
    <property type="entry name" value="PSI_PsaJ"/>
</dbReference>
<dbReference type="InterPro" id="IPR036062">
    <property type="entry name" value="PSI_PsaJ_sf"/>
</dbReference>
<dbReference type="PANTHER" id="PTHR36082">
    <property type="match status" value="1"/>
</dbReference>
<dbReference type="PANTHER" id="PTHR36082:SF2">
    <property type="entry name" value="PHOTOSYSTEM I REACTION CENTER SUBUNIT IX"/>
    <property type="match status" value="1"/>
</dbReference>
<dbReference type="Pfam" id="PF01701">
    <property type="entry name" value="PSI_PsaJ"/>
    <property type="match status" value="1"/>
</dbReference>
<dbReference type="SUPFAM" id="SSF81544">
    <property type="entry name" value="Subunit IX of photosystem I reaction centre, PsaJ"/>
    <property type="match status" value="1"/>
</dbReference>
<gene>
    <name evidence="1" type="primary">psaJ</name>
    <name type="ordered locus">AM1_1439</name>
</gene>
<sequence>MGDVPLKIDSEKDFMKFFSTAPVIALVFFTLTAGFLVELNRFFPDILFFPY</sequence>